<organism>
    <name type="scientific">Milnesium tardigradum</name>
    <name type="common">Water bear</name>
    <name type="synonym">Tardigrade</name>
    <dbReference type="NCBI Taxonomy" id="46460"/>
    <lineage>
        <taxon>Eukaryota</taxon>
        <taxon>Metazoa</taxon>
        <taxon>Ecdysozoa</taxon>
        <taxon>Tardigrada</taxon>
        <taxon>Eutardigrada</taxon>
        <taxon>Apochela</taxon>
        <taxon>Milnesiidae</taxon>
        <taxon>Milnesium</taxon>
    </lineage>
</organism>
<keyword id="KW-1003">Cell membrane</keyword>
<keyword id="KW-0325">Glycoprotein</keyword>
<keyword id="KW-0472">Membrane</keyword>
<keyword id="KW-0677">Repeat</keyword>
<keyword id="KW-0346">Stress response</keyword>
<keyword id="KW-0812">Transmembrane</keyword>
<keyword id="KW-1133">Transmembrane helix</keyword>
<keyword id="KW-0813">Transport</keyword>
<comment type="function">
    <text evidence="8">Aquaglyceroporin that may modulate the water content and osmolytes during anhydrobiosis (PubMed:23761966).</text>
</comment>
<comment type="subcellular location">
    <subcellularLocation>
        <location evidence="7">Cell membrane</location>
        <topology evidence="1">Multi-pass membrane protein</topology>
    </subcellularLocation>
</comment>
<comment type="induction">
    <text evidence="4 5">Expressed in early embryonic state, adult active, and adult anhydrobiotic state (PubMed:23029181). Transcript abundance is high and expression levels are not significantly affected by desiccation or rehydratation (PubMed:23761966).</text>
</comment>
<comment type="domain">
    <text evidence="8">Aquaporins contain two tandem repeats each containing three membrane-spanning domains and a pore-forming loop with the signature motif Asn-Pro-Ala (NPA).</text>
</comment>
<comment type="similarity">
    <text evidence="7">Belongs to the MIP/aquaporin (TC 1.A.8) family.</text>
</comment>
<evidence type="ECO:0000255" key="1"/>
<evidence type="ECO:0000255" key="2">
    <source>
        <dbReference type="PROSITE-ProRule" id="PRU00498"/>
    </source>
</evidence>
<evidence type="ECO:0000256" key="3">
    <source>
        <dbReference type="SAM" id="MobiDB-lite"/>
    </source>
</evidence>
<evidence type="ECO:0000269" key="4">
    <source>
    </source>
</evidence>
<evidence type="ECO:0000269" key="5">
    <source>
    </source>
</evidence>
<evidence type="ECO:0000303" key="6">
    <source>
    </source>
</evidence>
<evidence type="ECO:0000305" key="7"/>
<evidence type="ECO:0000305" key="8">
    <source>
    </source>
</evidence>
<proteinExistence type="evidence at protein level"/>
<reference key="1">
    <citation type="journal article" date="2013" name="Bioinf. Biol. Insights">
        <title>The aquaporin channel repertoire of the tardigrade Milnesium tardigradum.</title>
        <authorList>
            <person name="Grohme M.A."/>
            <person name="Mali B."/>
            <person name="Welnicz W."/>
            <person name="Michel S."/>
            <person name="Schill R.O."/>
            <person name="Frohme M."/>
        </authorList>
    </citation>
    <scope>NUCLEOTIDE SEQUENCE [MRNA]</scope>
    <scope>DOMAIN</scope>
    <scope>INDUCTION</scope>
</reference>
<reference key="2">
    <citation type="journal article" date="2012" name="PLoS ONE">
        <title>Comparative proteome analysis of Milnesium tardigradum in early embryonic state versus adults in active and anhydrobiotic state.</title>
        <authorList>
            <person name="Schokraie E."/>
            <person name="Warnken U."/>
            <person name="Hotz-Wagenblatt A."/>
            <person name="Grohme M.A."/>
            <person name="Hengherr S."/>
            <person name="Foerster F."/>
            <person name="Schill R.O."/>
            <person name="Frohme M."/>
            <person name="Dandekar T."/>
            <person name="Schnoelzer M."/>
        </authorList>
    </citation>
    <scope>IDENTIFICATION BY MASS SPECTROMETRY</scope>
    <scope>INDUCTION</scope>
</reference>
<protein>
    <recommendedName>
        <fullName evidence="6">Aquaporin-10</fullName>
        <shortName evidence="6">AQP-10</shortName>
    </recommendedName>
</protein>
<dbReference type="EMBL" id="JN378745">
    <property type="protein sequence ID" value="AEP14564.1"/>
    <property type="molecule type" value="mRNA"/>
</dbReference>
<dbReference type="SMR" id="G5CTG7"/>
<dbReference type="GlyCosmos" id="G5CTG7">
    <property type="glycosylation" value="1 site, No reported glycans"/>
</dbReference>
<dbReference type="GO" id="GO:0016323">
    <property type="term" value="C:basolateral plasma membrane"/>
    <property type="evidence" value="ECO:0007669"/>
    <property type="project" value="TreeGrafter"/>
</dbReference>
<dbReference type="GO" id="GO:0015254">
    <property type="term" value="F:glycerol channel activity"/>
    <property type="evidence" value="ECO:0007669"/>
    <property type="project" value="TreeGrafter"/>
</dbReference>
<dbReference type="GO" id="GO:0015250">
    <property type="term" value="F:water channel activity"/>
    <property type="evidence" value="ECO:0007669"/>
    <property type="project" value="TreeGrafter"/>
</dbReference>
<dbReference type="CDD" id="cd00333">
    <property type="entry name" value="MIP"/>
    <property type="match status" value="1"/>
</dbReference>
<dbReference type="FunFam" id="1.20.1080.10:FF:000064">
    <property type="entry name" value="Uncharacterized protein"/>
    <property type="match status" value="1"/>
</dbReference>
<dbReference type="Gene3D" id="1.20.1080.10">
    <property type="entry name" value="Glycerol uptake facilitator protein"/>
    <property type="match status" value="1"/>
</dbReference>
<dbReference type="InterPro" id="IPR023271">
    <property type="entry name" value="Aquaporin-like"/>
</dbReference>
<dbReference type="InterPro" id="IPR000425">
    <property type="entry name" value="MIP"/>
</dbReference>
<dbReference type="InterPro" id="IPR050363">
    <property type="entry name" value="MIP/Aquaporin"/>
</dbReference>
<dbReference type="InterPro" id="IPR022357">
    <property type="entry name" value="MIP_CS"/>
</dbReference>
<dbReference type="NCBIfam" id="TIGR00861">
    <property type="entry name" value="MIP"/>
    <property type="match status" value="1"/>
</dbReference>
<dbReference type="PANTHER" id="PTHR43829">
    <property type="entry name" value="AQUAPORIN OR AQUAGLYCEROPORIN RELATED"/>
    <property type="match status" value="1"/>
</dbReference>
<dbReference type="PANTHER" id="PTHR43829:SF9">
    <property type="entry name" value="AQUAPORIN-9"/>
    <property type="match status" value="1"/>
</dbReference>
<dbReference type="Pfam" id="PF00230">
    <property type="entry name" value="MIP"/>
    <property type="match status" value="1"/>
</dbReference>
<dbReference type="PRINTS" id="PR00783">
    <property type="entry name" value="MINTRINSICP"/>
</dbReference>
<dbReference type="SUPFAM" id="SSF81338">
    <property type="entry name" value="Aquaporin-like"/>
    <property type="match status" value="1"/>
</dbReference>
<dbReference type="PROSITE" id="PS00221">
    <property type="entry name" value="MIP"/>
    <property type="match status" value="1"/>
</dbReference>
<sequence>MADAPTYIRQSTTGTATTAPTTMPVHPDTTYYKTTTTTVSDAPRAIADVNDDNHDNYDETTGLRSGEKKTRPLVTSTTAPIDAGRMTLGQKISRWTRIGSDLAREALAEFLGSFILIVFGNGVVAQVVLSRGAHGNFLSINIGYGLAVAFGVYIAGGISGGHLNPAVSLAFAALGKLPWRKLPVYMFAQYAGCICASAIVHAIYYDALNNYDGGNRTRGDTWQSTAGIHASYPQEFLYWQTGLADQIFATSFLMIGILALTDNRNTGPPGGVVPILVGCLVMAIGLAYGFNCGYPINPARDMGPRLFTLMAGWGSRTFSNYNPYIFNDYYQRIPYWFWIPVVGPHLGALLGAAIYFFFIGNHWPTLHRNVLELQVGHRDNSDDIELLAAKSRRPIEVVTTTETTRERRT</sequence>
<gene>
    <name evidence="6" type="primary">AQP10</name>
</gene>
<name>AQP10_MILTA</name>
<feature type="chain" id="PRO_0000440211" description="Aquaporin-10">
    <location>
        <begin position="1"/>
        <end position="409"/>
    </location>
</feature>
<feature type="transmembrane region" description="Helical" evidence="1">
    <location>
        <begin position="110"/>
        <end position="130"/>
    </location>
</feature>
<feature type="transmembrane region" description="Helical" evidence="1">
    <location>
        <begin position="138"/>
        <end position="158"/>
    </location>
</feature>
<feature type="transmembrane region" description="Helical" evidence="1">
    <location>
        <begin position="184"/>
        <end position="204"/>
    </location>
</feature>
<feature type="transmembrane region" description="Helical" evidence="1">
    <location>
        <begin position="241"/>
        <end position="261"/>
    </location>
</feature>
<feature type="transmembrane region" description="Helical" evidence="1">
    <location>
        <begin position="270"/>
        <end position="290"/>
    </location>
</feature>
<feature type="transmembrane region" description="Helical" evidence="1">
    <location>
        <begin position="339"/>
        <end position="359"/>
    </location>
</feature>
<feature type="region of interest" description="Disordered" evidence="3">
    <location>
        <begin position="1"/>
        <end position="24"/>
    </location>
</feature>
<feature type="region of interest" description="Disordered" evidence="3">
    <location>
        <begin position="47"/>
        <end position="74"/>
    </location>
</feature>
<feature type="short sequence motif" description="NPA 1">
    <location>
        <begin position="164"/>
        <end position="166"/>
    </location>
</feature>
<feature type="short sequence motif" description="NPA 2">
    <location>
        <begin position="297"/>
        <end position="299"/>
    </location>
</feature>
<feature type="compositionally biased region" description="Low complexity" evidence="3">
    <location>
        <begin position="12"/>
        <end position="22"/>
    </location>
</feature>
<feature type="glycosylation site" description="N-linked (GlcNAc...) asparagine" evidence="2">
    <location>
        <position position="215"/>
    </location>
</feature>
<accession>G5CTG7</accession>